<reference key="1">
    <citation type="journal article" date="2009" name="PLoS Genet.">
        <title>Organised genome dynamics in the Escherichia coli species results in highly diverse adaptive paths.</title>
        <authorList>
            <person name="Touchon M."/>
            <person name="Hoede C."/>
            <person name="Tenaillon O."/>
            <person name="Barbe V."/>
            <person name="Baeriswyl S."/>
            <person name="Bidet P."/>
            <person name="Bingen E."/>
            <person name="Bonacorsi S."/>
            <person name="Bouchier C."/>
            <person name="Bouvet O."/>
            <person name="Calteau A."/>
            <person name="Chiapello H."/>
            <person name="Clermont O."/>
            <person name="Cruveiller S."/>
            <person name="Danchin A."/>
            <person name="Diard M."/>
            <person name="Dossat C."/>
            <person name="Karoui M.E."/>
            <person name="Frapy E."/>
            <person name="Garry L."/>
            <person name="Ghigo J.M."/>
            <person name="Gilles A.M."/>
            <person name="Johnson J."/>
            <person name="Le Bouguenec C."/>
            <person name="Lescat M."/>
            <person name="Mangenot S."/>
            <person name="Martinez-Jehanne V."/>
            <person name="Matic I."/>
            <person name="Nassif X."/>
            <person name="Oztas S."/>
            <person name="Petit M.A."/>
            <person name="Pichon C."/>
            <person name="Rouy Z."/>
            <person name="Ruf C.S."/>
            <person name="Schneider D."/>
            <person name="Tourret J."/>
            <person name="Vacherie B."/>
            <person name="Vallenet D."/>
            <person name="Medigue C."/>
            <person name="Rocha E.P.C."/>
            <person name="Denamur E."/>
        </authorList>
    </citation>
    <scope>NUCLEOTIDE SEQUENCE [LARGE SCALE GENOMIC DNA]</scope>
    <source>
        <strain>IAI1</strain>
    </source>
</reference>
<protein>
    <recommendedName>
        <fullName evidence="1">Shikimate kinase 2</fullName>
        <shortName evidence="1">SK 2</shortName>
        <ecNumber evidence="1">2.7.1.71</ecNumber>
    </recommendedName>
</protein>
<evidence type="ECO:0000255" key="1">
    <source>
        <dbReference type="HAMAP-Rule" id="MF_01269"/>
    </source>
</evidence>
<comment type="function">
    <text evidence="1">Catalyzes the specific phosphorylation of the 3-hydroxyl group of shikimic acid using ATP as a cosubstrate.</text>
</comment>
<comment type="catalytic activity">
    <reaction evidence="1">
        <text>shikimate + ATP = 3-phosphoshikimate + ADP + H(+)</text>
        <dbReference type="Rhea" id="RHEA:13121"/>
        <dbReference type="ChEBI" id="CHEBI:15378"/>
        <dbReference type="ChEBI" id="CHEBI:30616"/>
        <dbReference type="ChEBI" id="CHEBI:36208"/>
        <dbReference type="ChEBI" id="CHEBI:145989"/>
        <dbReference type="ChEBI" id="CHEBI:456216"/>
        <dbReference type="EC" id="2.7.1.71"/>
    </reaction>
</comment>
<comment type="cofactor">
    <cofactor evidence="1">
        <name>Mg(2+)</name>
        <dbReference type="ChEBI" id="CHEBI:18420"/>
    </cofactor>
    <text evidence="1">Binds 1 Mg(2+) ion per subunit.</text>
</comment>
<comment type="pathway">
    <text evidence="1">Metabolic intermediate biosynthesis; chorismate biosynthesis; chorismate from D-erythrose 4-phosphate and phosphoenolpyruvate: step 5/7.</text>
</comment>
<comment type="subunit">
    <text evidence="1">Monomer.</text>
</comment>
<comment type="subcellular location">
    <subcellularLocation>
        <location evidence="1">Cytoplasm</location>
    </subcellularLocation>
</comment>
<comment type="domain">
    <text evidence="1">The LID domain closes over the active site upon ATP binding.</text>
</comment>
<comment type="similarity">
    <text evidence="1">Belongs to the shikimate kinase family. AroL subfamily.</text>
</comment>
<accession>B7M333</accession>
<proteinExistence type="inferred from homology"/>
<organism>
    <name type="scientific">Escherichia coli O8 (strain IAI1)</name>
    <dbReference type="NCBI Taxonomy" id="585034"/>
    <lineage>
        <taxon>Bacteria</taxon>
        <taxon>Pseudomonadati</taxon>
        <taxon>Pseudomonadota</taxon>
        <taxon>Gammaproteobacteria</taxon>
        <taxon>Enterobacterales</taxon>
        <taxon>Enterobacteriaceae</taxon>
        <taxon>Escherichia</taxon>
    </lineage>
</organism>
<dbReference type="EC" id="2.7.1.71" evidence="1"/>
<dbReference type="EMBL" id="CU928160">
    <property type="protein sequence ID" value="CAQ97260.1"/>
    <property type="molecule type" value="Genomic_DNA"/>
</dbReference>
<dbReference type="RefSeq" id="WP_000193393.1">
    <property type="nucleotide sequence ID" value="NC_011741.1"/>
</dbReference>
<dbReference type="SMR" id="B7M333"/>
<dbReference type="GeneID" id="93777073"/>
<dbReference type="KEGG" id="ecr:ECIAI1_0388"/>
<dbReference type="HOGENOM" id="CLU_057607_4_3_6"/>
<dbReference type="UniPathway" id="UPA00053">
    <property type="reaction ID" value="UER00088"/>
</dbReference>
<dbReference type="GO" id="GO:0005829">
    <property type="term" value="C:cytosol"/>
    <property type="evidence" value="ECO:0007669"/>
    <property type="project" value="TreeGrafter"/>
</dbReference>
<dbReference type="GO" id="GO:0005524">
    <property type="term" value="F:ATP binding"/>
    <property type="evidence" value="ECO:0007669"/>
    <property type="project" value="UniProtKB-UniRule"/>
</dbReference>
<dbReference type="GO" id="GO:0000287">
    <property type="term" value="F:magnesium ion binding"/>
    <property type="evidence" value="ECO:0007669"/>
    <property type="project" value="UniProtKB-UniRule"/>
</dbReference>
<dbReference type="GO" id="GO:0004765">
    <property type="term" value="F:shikimate kinase activity"/>
    <property type="evidence" value="ECO:0007669"/>
    <property type="project" value="UniProtKB-UniRule"/>
</dbReference>
<dbReference type="GO" id="GO:0008652">
    <property type="term" value="P:amino acid biosynthetic process"/>
    <property type="evidence" value="ECO:0007669"/>
    <property type="project" value="UniProtKB-KW"/>
</dbReference>
<dbReference type="GO" id="GO:0009073">
    <property type="term" value="P:aromatic amino acid family biosynthetic process"/>
    <property type="evidence" value="ECO:0007669"/>
    <property type="project" value="UniProtKB-KW"/>
</dbReference>
<dbReference type="GO" id="GO:0009423">
    <property type="term" value="P:chorismate biosynthetic process"/>
    <property type="evidence" value="ECO:0007669"/>
    <property type="project" value="UniProtKB-UniRule"/>
</dbReference>
<dbReference type="CDD" id="cd00464">
    <property type="entry name" value="SK"/>
    <property type="match status" value="1"/>
</dbReference>
<dbReference type="FunFam" id="3.40.50.300:FF:000408">
    <property type="entry name" value="Shikimate kinase 2"/>
    <property type="match status" value="1"/>
</dbReference>
<dbReference type="Gene3D" id="3.40.50.300">
    <property type="entry name" value="P-loop containing nucleotide triphosphate hydrolases"/>
    <property type="match status" value="1"/>
</dbReference>
<dbReference type="HAMAP" id="MF_00109">
    <property type="entry name" value="Shikimate_kinase"/>
    <property type="match status" value="1"/>
</dbReference>
<dbReference type="HAMAP" id="MF_01269">
    <property type="entry name" value="Shikimate_kinase_2"/>
    <property type="match status" value="1"/>
</dbReference>
<dbReference type="InterPro" id="IPR027417">
    <property type="entry name" value="P-loop_NTPase"/>
</dbReference>
<dbReference type="InterPro" id="IPR031322">
    <property type="entry name" value="Shikimate/glucono_kinase"/>
</dbReference>
<dbReference type="InterPro" id="IPR000623">
    <property type="entry name" value="Shikimate_kinase/TSH1"/>
</dbReference>
<dbReference type="InterPro" id="IPR027544">
    <property type="entry name" value="Shikimate_kinase_2"/>
</dbReference>
<dbReference type="InterPro" id="IPR023000">
    <property type="entry name" value="Shikimate_kinase_CS"/>
</dbReference>
<dbReference type="NCBIfam" id="NF002988">
    <property type="entry name" value="PRK03731.1"/>
    <property type="match status" value="1"/>
</dbReference>
<dbReference type="PANTHER" id="PTHR21087">
    <property type="entry name" value="SHIKIMATE KINASE"/>
    <property type="match status" value="1"/>
</dbReference>
<dbReference type="PANTHER" id="PTHR21087:SF21">
    <property type="entry name" value="SHIKIMATE KINASE 2"/>
    <property type="match status" value="1"/>
</dbReference>
<dbReference type="Pfam" id="PF01202">
    <property type="entry name" value="SKI"/>
    <property type="match status" value="1"/>
</dbReference>
<dbReference type="PRINTS" id="PR01100">
    <property type="entry name" value="SHIKIMTKNASE"/>
</dbReference>
<dbReference type="SUPFAM" id="SSF52540">
    <property type="entry name" value="P-loop containing nucleoside triphosphate hydrolases"/>
    <property type="match status" value="1"/>
</dbReference>
<dbReference type="PROSITE" id="PS01128">
    <property type="entry name" value="SHIKIMATE_KINASE"/>
    <property type="match status" value="1"/>
</dbReference>
<keyword id="KW-0028">Amino-acid biosynthesis</keyword>
<keyword id="KW-0057">Aromatic amino acid biosynthesis</keyword>
<keyword id="KW-0067">ATP-binding</keyword>
<keyword id="KW-0963">Cytoplasm</keyword>
<keyword id="KW-0418">Kinase</keyword>
<keyword id="KW-0460">Magnesium</keyword>
<keyword id="KW-0479">Metal-binding</keyword>
<keyword id="KW-0547">Nucleotide-binding</keyword>
<keyword id="KW-0808">Transferase</keyword>
<name>AROL_ECO8A</name>
<gene>
    <name evidence="1" type="primary">aroL</name>
    <name type="ordered locus">ECIAI1_0388</name>
</gene>
<sequence>MTQPLFLIGPRGCGKTTVGMALADSLNRRFVDTDQWLQSQLNMTVAEIVEREEWAGFRARETAALEAVTAPSTVIATGGGIILTEFNRHFMQNNGIVVYLCAPVSVLVNRLQAAPEEDLRPTLTGKPLSEEVQEVLEERDALYREVAHIIIDATNEPSQVISEIRSALAQTINC</sequence>
<feature type="chain" id="PRO_1000140130" description="Shikimate kinase 2">
    <location>
        <begin position="1"/>
        <end position="174"/>
    </location>
</feature>
<feature type="region of interest" description="LID domain">
    <location>
        <begin position="112"/>
        <end position="126"/>
    </location>
</feature>
<feature type="binding site" evidence="1">
    <location>
        <begin position="12"/>
        <end position="17"/>
    </location>
    <ligand>
        <name>ATP</name>
        <dbReference type="ChEBI" id="CHEBI:30616"/>
    </ligand>
</feature>
<feature type="binding site" evidence="1">
    <location>
        <position position="16"/>
    </location>
    <ligand>
        <name>Mg(2+)</name>
        <dbReference type="ChEBI" id="CHEBI:18420"/>
    </ligand>
</feature>
<feature type="binding site" evidence="1">
    <location>
        <position position="32"/>
    </location>
    <ligand>
        <name>Mg(2+)</name>
        <dbReference type="ChEBI" id="CHEBI:18420"/>
    </ligand>
</feature>
<feature type="binding site" evidence="1">
    <location>
        <position position="34"/>
    </location>
    <ligand>
        <name>substrate</name>
    </ligand>
</feature>
<feature type="binding site" evidence="1">
    <location>
        <position position="58"/>
    </location>
    <ligand>
        <name>substrate</name>
    </ligand>
</feature>
<feature type="binding site" evidence="1">
    <location>
        <position position="79"/>
    </location>
    <ligand>
        <name>substrate</name>
    </ligand>
</feature>
<feature type="binding site" evidence="1">
    <location>
        <position position="120"/>
    </location>
    <ligand>
        <name>ATP</name>
        <dbReference type="ChEBI" id="CHEBI:30616"/>
    </ligand>
</feature>
<feature type="binding site" evidence="1">
    <location>
        <position position="139"/>
    </location>
    <ligand>
        <name>substrate</name>
    </ligand>
</feature>